<reference key="1">
    <citation type="submission" date="1998-02" db="EMBL/GenBank/DDBJ databases">
        <title>Structure and evolution of FKBP-like genes in Arabidopsis.</title>
        <authorList>
            <person name="Kolukisaoglu U."/>
            <person name="Berger J."/>
            <person name="Eckhoff A."/>
            <person name="Moeller A."/>
            <person name="Saal B."/>
            <person name="Bellini C."/>
            <person name="Schulz B."/>
        </authorList>
    </citation>
    <scope>NUCLEOTIDE SEQUENCE [MRNA]</scope>
    <source>
        <strain>cv. Columbia</strain>
    </source>
</reference>
<reference key="2">
    <citation type="journal article" date="2000" name="DNA Res.">
        <title>Structural analysis of Arabidopsis thaliana chromosome 3. I. Sequence features of the regions of 4,504,864 bp covered by sixty P1 and TAC clones.</title>
        <authorList>
            <person name="Sato S."/>
            <person name="Nakamura Y."/>
            <person name="Kaneko T."/>
            <person name="Katoh T."/>
            <person name="Asamizu E."/>
            <person name="Tabata S."/>
        </authorList>
    </citation>
    <scope>NUCLEOTIDE SEQUENCE [LARGE SCALE GENOMIC DNA]</scope>
    <source>
        <strain>cv. Columbia</strain>
    </source>
</reference>
<reference key="3">
    <citation type="journal article" date="2017" name="Plant J.">
        <title>Araport11: a complete reannotation of the Arabidopsis thaliana reference genome.</title>
        <authorList>
            <person name="Cheng C.Y."/>
            <person name="Krishnakumar V."/>
            <person name="Chan A.P."/>
            <person name="Thibaud-Nissen F."/>
            <person name="Schobel S."/>
            <person name="Town C.D."/>
        </authorList>
    </citation>
    <scope>GENOME REANNOTATION</scope>
    <source>
        <strain>cv. Columbia</strain>
    </source>
</reference>
<reference key="4">
    <citation type="journal article" date="2003" name="Science">
        <title>Empirical analysis of transcriptional activity in the Arabidopsis genome.</title>
        <authorList>
            <person name="Yamada K."/>
            <person name="Lim J."/>
            <person name="Dale J.M."/>
            <person name="Chen H."/>
            <person name="Shinn P."/>
            <person name="Palm C.J."/>
            <person name="Southwick A.M."/>
            <person name="Wu H.C."/>
            <person name="Kim C.J."/>
            <person name="Nguyen M."/>
            <person name="Pham P.K."/>
            <person name="Cheuk R.F."/>
            <person name="Karlin-Newmann G."/>
            <person name="Liu S.X."/>
            <person name="Lam B."/>
            <person name="Sakano H."/>
            <person name="Wu T."/>
            <person name="Yu G."/>
            <person name="Miranda M."/>
            <person name="Quach H.L."/>
            <person name="Tripp M."/>
            <person name="Chang C.H."/>
            <person name="Lee J.M."/>
            <person name="Toriumi M.J."/>
            <person name="Chan M.M."/>
            <person name="Tang C.C."/>
            <person name="Onodera C.S."/>
            <person name="Deng J.M."/>
            <person name="Akiyama K."/>
            <person name="Ansari Y."/>
            <person name="Arakawa T."/>
            <person name="Banh J."/>
            <person name="Banno F."/>
            <person name="Bowser L."/>
            <person name="Brooks S.Y."/>
            <person name="Carninci P."/>
            <person name="Chao Q."/>
            <person name="Choy N."/>
            <person name="Enju A."/>
            <person name="Goldsmith A.D."/>
            <person name="Gurjal M."/>
            <person name="Hansen N.F."/>
            <person name="Hayashizaki Y."/>
            <person name="Johnson-Hopson C."/>
            <person name="Hsuan V.W."/>
            <person name="Iida K."/>
            <person name="Karnes M."/>
            <person name="Khan S."/>
            <person name="Koesema E."/>
            <person name="Ishida J."/>
            <person name="Jiang P.X."/>
            <person name="Jones T."/>
            <person name="Kawai J."/>
            <person name="Kamiya A."/>
            <person name="Meyers C."/>
            <person name="Nakajima M."/>
            <person name="Narusaka M."/>
            <person name="Seki M."/>
            <person name="Sakurai T."/>
            <person name="Satou M."/>
            <person name="Tamse R."/>
            <person name="Vaysberg M."/>
            <person name="Wallender E.K."/>
            <person name="Wong C."/>
            <person name="Yamamura Y."/>
            <person name="Yuan S."/>
            <person name="Shinozaki K."/>
            <person name="Davis R.W."/>
            <person name="Theologis A."/>
            <person name="Ecker J.R."/>
        </authorList>
    </citation>
    <scope>NUCLEOTIDE SEQUENCE [LARGE SCALE MRNA]</scope>
    <source>
        <strain>cv. Columbia</strain>
    </source>
</reference>
<reference key="5">
    <citation type="journal article" date="2002" name="Plant J.">
        <title>Characterization of Arabidopsis thaliana AtFKBP42 that is membrane-bound and interacts with Hsp90.</title>
        <authorList>
            <person name="Kamphausen T."/>
            <person name="Fanghaenel J."/>
            <person name="Neumann D."/>
            <person name="Schulz B."/>
            <person name="Rahfeld J.-U."/>
        </authorList>
    </citation>
    <scope>SUBCELLULAR LOCATION</scope>
    <scope>INTERACTION WITH CALMODULIN AND SHD/HSP90</scope>
    <scope>DISRUPTION PHENOTYPE</scope>
</reference>
<reference key="6">
    <citation type="journal article" date="2003" name="Mol. Biol. Cell">
        <title>TWISTED DWARF1, a unique plasma membrane-anchored immunophilin-like protein, interacts with Arabidopsis multidrug resistance-like transporters AtPGP1 and AtPGP19.</title>
        <authorList>
            <person name="Geisler M."/>
            <person name="Kolukisaoglu H.U."/>
            <person name="Bouchard R."/>
            <person name="Billion K."/>
            <person name="Berger J."/>
            <person name="Saal B."/>
            <person name="Frangne N."/>
            <person name="Koncz-Kalman Z."/>
            <person name="Koncz C."/>
            <person name="Dudler R."/>
            <person name="Blakeslee J.J."/>
            <person name="Murphy A.S."/>
            <person name="Martinoia E."/>
            <person name="Schulz B."/>
        </authorList>
    </citation>
    <scope>FUNCTION</scope>
    <scope>SUBCELLULAR LOCATION</scope>
    <scope>INTERACTION WITH MDR1/PGP1 AND MDR11/PGP19</scope>
</reference>
<reference key="7">
    <citation type="journal article" date="2004" name="Mol. Biol. Cell">
        <title>Arabidopsis immunophilin-like TWD1 functionally interacts with vacuolar ABC transporters.</title>
        <authorList>
            <person name="Geisler M."/>
            <person name="Girin M."/>
            <person name="Brandt S."/>
            <person name="Vincenzetti V."/>
            <person name="Plaza S."/>
            <person name="Paris N."/>
            <person name="Kobae Y."/>
            <person name="Maeshima M."/>
            <person name="Billion K."/>
            <person name="Kolukisaoglu U.H."/>
            <person name="Schulz B."/>
            <person name="Martinoia E."/>
        </authorList>
    </citation>
    <scope>FUNCTION</scope>
    <scope>SUBCELLULAR LOCATION</scope>
    <scope>INTERACTION WITH MRP1 AND MRP2</scope>
</reference>
<reference key="8">
    <citation type="journal article" date="2004" name="Plant Physiol.">
        <title>The ULTRACURVATA2 gene of Arabidopsis encodes an FK506-binding protein involved in auxin and brassinosteroid signaling.</title>
        <authorList>
            <person name="Perez-Perez J.M."/>
            <person name="Ponce M.R."/>
            <person name="Micol J.L."/>
        </authorList>
    </citation>
    <scope>FUNCTION</scope>
</reference>
<reference key="9">
    <citation type="journal article" date="2004" name="Plant Physiol.">
        <title>Immunophilins and parvulins. Superfamily of peptidyl prolyl isomerases in Arabidopsis.</title>
        <authorList>
            <person name="He Z."/>
            <person name="Li L."/>
            <person name="Luan S."/>
        </authorList>
    </citation>
    <scope>GENE FAMILY</scope>
    <scope>NOMENCLATURE</scope>
</reference>
<reference key="10">
    <citation type="journal article" date="2006" name="J. Biol. Chem.">
        <title>Immunophilin-like TWISTED DWARF1 modulates auxin efflux activities of Arabidopsis P-glycoproteins.</title>
        <authorList>
            <person name="Bouchard R."/>
            <person name="Bailly A."/>
            <person name="Blakeslee J.J."/>
            <person name="Oehring S.C."/>
            <person name="Vincenzetti V."/>
            <person name="Lee O.R."/>
            <person name="Paponov I."/>
            <person name="Palme K."/>
            <person name="Mancuso S."/>
            <person name="Murphy A.S."/>
            <person name="Schulz B."/>
            <person name="Geisler M."/>
        </authorList>
    </citation>
    <scope>FUNCTION</scope>
</reference>
<reference key="11">
    <citation type="journal article" date="2008" name="J. Biol. Chem.">
        <title>Modulation of P-glycoproteins by auxin transport inhibitors is mediated by interaction with immunophilins.</title>
        <authorList>
            <person name="Bailly A."/>
            <person name="Sovero V."/>
            <person name="Vincenzetti V."/>
            <person name="Santelia D."/>
            <person name="Bartnik D."/>
            <person name="Koenig B.W."/>
            <person name="Mancuso S."/>
            <person name="Martinoia E."/>
            <person name="Geisler M."/>
        </authorList>
    </citation>
    <scope>FUNCTION</scope>
    <scope>INTERACTION WITH NPA</scope>
</reference>
<reference key="12">
    <citation type="journal article" date="2010" name="Plant Cell">
        <title>The ER-localized TWD1 immunophilin is necessary for localization of multidrug resistance-like proteins required for polar auxin transport in Arabidopsis roots.</title>
        <authorList>
            <person name="Wu G."/>
            <person name="Otegui M.S."/>
            <person name="Spalding E.P."/>
        </authorList>
    </citation>
    <scope>FUNCTION</scope>
    <scope>SUBCELLULAR LOCATION</scope>
</reference>
<reference key="13">
    <citation type="journal article" date="2022" name="Front. Plant Sci.">
        <title>Loss of multiple ABCB auxin transporters recapitulates the major twisted dwarf 1 phenotypes in Arabidopsis thaliana.</title>
        <authorList>
            <person name="Jenness M.K."/>
            <person name="Tayengwa R."/>
            <person name="Bate G.A."/>
            <person name="Tapken W."/>
            <person name="Zhang Y."/>
            <person name="Pang C."/>
            <person name="Murphy A.S."/>
        </authorList>
    </citation>
    <scope>FUNCTION</scope>
    <scope>DISRUPTION PHENOTYPE</scope>
    <source>
        <strain>cv. Columbia</strain>
    </source>
</reference>
<reference key="14">
    <citation type="journal article" date="2022" name="J. Exp. Bot.">
        <title>Arabidopsis TWISTED DWARF1 regulates stamen elongation by differential activation of ABCB1,19-mediated auxin transport.</title>
        <authorList>
            <person name="Liu J."/>
            <person name="Ghelli R."/>
            <person name="Cardarelli M."/>
            <person name="Geisler M."/>
        </authorList>
    </citation>
    <scope>FUNCTION</scope>
    <scope>DISRUPTION PHENOTYPE</scope>
    <scope>DEVELOPMENTAL STAGE</scope>
    <scope>SUBCELLULAR LOCATION</scope>
    <source>
        <strain>cv. Columbia</strain>
    </source>
</reference>
<reference key="15">
    <citation type="journal article" date="2006" name="FEBS Lett.">
        <title>Crystal structure of a plant immunophilin domain involved in regulation of MDR-type ABC transporters.</title>
        <authorList>
            <person name="Weiergraeber O.H."/>
            <person name="Eckhoff A."/>
            <person name="Granzin J."/>
        </authorList>
    </citation>
    <scope>X-RAY CRYSTALLOGRAPHY (2.32 ANGSTROMS) OF 1-180</scope>
</reference>
<reference key="16">
    <citation type="journal article" date="2006" name="J. Mol. Biol.">
        <title>Crystal structure of a multi-domain immunophilin from Arabidopsis thaliana: a paradigm for regulation of plant ABC transporters.</title>
        <authorList>
            <person name="Granzin J."/>
            <person name="Eckhoff A."/>
            <person name="Weiergraber O.H."/>
        </authorList>
    </citation>
    <scope>X-RAY CRYSTALLOGRAPHY (2.85 ANGSTROMS) OF 1-338</scope>
</reference>
<reference key="17">
    <citation type="journal article" date="2007" name="Eur. Biophys. J.">
        <title>Solid-state NMR characterization of the putative membrane anchor of TWD1 from Arabidopsis thaliana.</title>
        <authorList>
            <person name="Scheidt H.A."/>
            <person name="Vogel A."/>
            <person name="Eckhoff A."/>
            <person name="Koenig B.W."/>
            <person name="Huster D."/>
        </authorList>
    </citation>
    <scope>STRUCTURE BY NMR OF 335-365</scope>
    <scope>MEMBRANE ANCHOR</scope>
</reference>
<accession>Q9LDC0</accession>
<accession>Q8RWM0</accession>
<feature type="chain" id="PRO_0000226087" description="Peptidyl-prolyl cis-trans isomerase FKBP42">
    <location>
        <begin position="1"/>
        <end position="365"/>
    </location>
</feature>
<feature type="transmembrane region" description="Helical; Anchor for type IV membrane protein" evidence="2">
    <location>
        <begin position="338"/>
        <end position="357"/>
    </location>
</feature>
<feature type="domain" description="PPIase FKBP-type" evidence="3">
    <location>
        <begin position="67"/>
        <end position="159"/>
    </location>
</feature>
<feature type="repeat" description="TPR 1" evidence="2">
    <location>
        <begin position="179"/>
        <end position="212"/>
    </location>
</feature>
<feature type="repeat" description="TPR 2" evidence="2">
    <location>
        <begin position="230"/>
        <end position="263"/>
    </location>
</feature>
<feature type="repeat" description="TPR 3" evidence="2">
    <location>
        <begin position="264"/>
        <end position="297"/>
    </location>
</feature>
<feature type="region of interest" description="Interaction with MDR1/PGP1">
    <location>
        <begin position="1"/>
        <end position="163"/>
    </location>
</feature>
<feature type="region of interest" description="Disordered" evidence="4">
    <location>
        <begin position="1"/>
        <end position="44"/>
    </location>
</feature>
<feature type="region of interest" description="Interaction with MRP1" evidence="8">
    <location>
        <begin position="163"/>
        <end position="337"/>
    </location>
</feature>
<feature type="region of interest" description="Calmodulin-binding" evidence="2">
    <location>
        <begin position="310"/>
        <end position="326"/>
    </location>
</feature>
<feature type="compositionally biased region" description="Basic and acidic residues" evidence="4">
    <location>
        <begin position="1"/>
        <end position="15"/>
    </location>
</feature>
<feature type="sequence conflict" description="In Ref. 4; AAM13008/AAN65079." evidence="19" ref="4">
    <original>A</original>
    <variation>P</variation>
    <location>
        <position position="107"/>
    </location>
</feature>
<feature type="strand" evidence="22">
    <location>
        <begin position="45"/>
        <end position="48"/>
    </location>
</feature>
<feature type="strand" evidence="22">
    <location>
        <begin position="51"/>
        <end position="57"/>
    </location>
</feature>
<feature type="strand" evidence="22">
    <location>
        <begin position="69"/>
        <end position="78"/>
    </location>
</feature>
<feature type="turn" evidence="22">
    <location>
        <begin position="79"/>
        <end position="81"/>
    </location>
</feature>
<feature type="strand" evidence="22">
    <location>
        <begin position="84"/>
        <end position="87"/>
    </location>
</feature>
<feature type="turn" evidence="22">
    <location>
        <begin position="88"/>
        <end position="92"/>
    </location>
</feature>
<feature type="strand" evidence="22">
    <location>
        <begin position="95"/>
        <end position="98"/>
    </location>
</feature>
<feature type="helix" evidence="22">
    <location>
        <begin position="104"/>
        <end position="106"/>
    </location>
</feature>
<feature type="helix" evidence="22">
    <location>
        <begin position="107"/>
        <end position="113"/>
    </location>
</feature>
<feature type="strand" evidence="22">
    <location>
        <begin position="121"/>
        <end position="126"/>
    </location>
</feature>
<feature type="helix" evidence="22">
    <location>
        <begin position="128"/>
        <end position="130"/>
    </location>
</feature>
<feature type="turn" evidence="22">
    <location>
        <begin position="131"/>
        <end position="135"/>
    </location>
</feature>
<feature type="strand" evidence="22">
    <location>
        <begin position="137"/>
        <end position="141"/>
    </location>
</feature>
<feature type="strand" evidence="22">
    <location>
        <begin position="149"/>
        <end position="159"/>
    </location>
</feature>
<feature type="turn" evidence="23">
    <location>
        <begin position="166"/>
        <end position="168"/>
    </location>
</feature>
<feature type="helix" evidence="23">
    <location>
        <begin position="172"/>
        <end position="188"/>
    </location>
</feature>
<feature type="strand" evidence="23">
    <location>
        <begin position="191"/>
        <end position="193"/>
    </location>
</feature>
<feature type="helix" evidence="23">
    <location>
        <begin position="196"/>
        <end position="208"/>
    </location>
</feature>
<feature type="helix" evidence="23">
    <location>
        <begin position="211"/>
        <end position="215"/>
    </location>
</feature>
<feature type="helix" evidence="23">
    <location>
        <begin position="219"/>
        <end position="229"/>
    </location>
</feature>
<feature type="helix" evidence="23">
    <location>
        <begin position="231"/>
        <end position="241"/>
    </location>
</feature>
<feature type="turn" evidence="23">
    <location>
        <begin position="242"/>
        <end position="244"/>
    </location>
</feature>
<feature type="helix" evidence="23">
    <location>
        <begin position="247"/>
        <end position="259"/>
    </location>
</feature>
<feature type="helix" evidence="23">
    <location>
        <begin position="264"/>
        <end position="275"/>
    </location>
</feature>
<feature type="turn" evidence="23">
    <location>
        <begin position="276"/>
        <end position="278"/>
    </location>
</feature>
<feature type="helix" evidence="23">
    <location>
        <begin position="280"/>
        <end position="289"/>
    </location>
</feature>
<comment type="function">
    <text evidence="1 6 7 8 9 10 11 12 13">PPIases accelerate the folding of proteins (By similarity). It catalyzes the cis-trans isomerization of proline imidic peptide bonds in oligopeptides (By similarity). Modulates the uptake of MRP substrates into the vacuole; reduces metolachlor-GS (MOC-GS) and enhances 17-beta-estradiol 17-(beta-D-glucuronide) (E(2)17betaG) uptake. Regulates cell elongation and orientation. Functions as a positive regulator of PGP1-mediated auxin transport. Confers drug modulation of PGP1 efflux activity as interaction with NPA or flavonol quercetin prevents its physical and functional interaction with PGP1. Required for the proper localization of auxin-related ABCB transporters (PubMed:35512423, PubMed:35528937). Plays a role in brassinosteroid (BR) signaling pathway. Required for seed development by promoting stamen elongation and, to a lesser extent, anther dehiscence and pollen maturation, probably as a chaperone helping ABCB1 and ABCB19 auxin transporters localization and activation (PubMed:35512423, PubMed:35528937). Involved in auxin signaling in nectaries to promote starch accumulation to attract visiting pollinators (PubMed:35512423).</text>
</comment>
<comment type="catalytic activity">
    <reaction evidence="3">
        <text>[protein]-peptidylproline (omega=180) = [protein]-peptidylproline (omega=0)</text>
        <dbReference type="Rhea" id="RHEA:16237"/>
        <dbReference type="Rhea" id="RHEA-COMP:10747"/>
        <dbReference type="Rhea" id="RHEA-COMP:10748"/>
        <dbReference type="ChEBI" id="CHEBI:83833"/>
        <dbReference type="ChEBI" id="CHEBI:83834"/>
        <dbReference type="EC" id="5.2.1.8"/>
    </reaction>
</comment>
<comment type="subunit">
    <text evidence="5 6 8 10">Interacts with calmodulin (CaM), MRP1, MRP2, MDR1/PGP1, MDR11/PGP19 and SHD/HSP90. Interacts with 1-naphthylphthalamic acid (NPA).</text>
</comment>
<comment type="interaction">
    <interactant intactId="EBI-360006">
        <id>Q9LDC0</id>
    </interactant>
    <interactant intactId="EBI-366396">
        <id>Q9ZR72</id>
        <label>ABCB1</label>
    </interactant>
    <organismsDiffer>false</organismsDiffer>
    <experiments>2</experiments>
</comment>
<comment type="interaction">
    <interactant intactId="EBI-360006">
        <id>Q9LDC0</id>
    </interactant>
    <interactant intactId="EBI-637633">
        <id>Q9C8G9</id>
        <label>ABCC1</label>
    </interactant>
    <organismsDiffer>false</organismsDiffer>
    <experiments>4</experiments>
</comment>
<comment type="subcellular location">
    <subcellularLocation>
        <location evidence="5 6 8 12">Cell membrane</location>
        <topology>Single-pass type IV membrane protein</topology>
    </subcellularLocation>
    <subcellularLocation>
        <location evidence="5 8">Vacuole membrane</location>
        <topology>Single-pass type IV membrane protein</topology>
    </subcellularLocation>
    <subcellularLocation>
        <location evidence="11">Endoplasmic reticulum</location>
    </subcellularLocation>
    <text evidence="12">Localized on the endothecium and middle layer cells plasma membrane.</text>
</comment>
<comment type="developmental stage">
    <text evidence="12">Expressed at both early and late stages of stamen development (PubMed:35512423). During stamen development, predominantly detected in the endothecium, the tapetum, and the meiocytes (at protein level) (PubMed:35512423).</text>
</comment>
<comment type="disruption phenotype">
    <text evidence="5 12 13">Plants display helical rotation of several organs (PubMed:12410806). Reduced number of small and curly flowers with low petal formation, as well as poor flower fertility due to short stamen filaments not sufficiently elongated to position the anthers above the stigma during anthesis; this phenotype is associated with reduced length of epidermal cells in the middle of stamen (PubMed:35512423, PubMed:35528937). Loss of auxin signaling in nectaries leading to reduced starch accumulation (PubMed:35512423). Impaired ABCB1 and ABCB19 localization at the plasma membrane of endothecium and middle layer cells of stamen (PubMed:35512423).</text>
</comment>
<comment type="similarity">
    <text evidence="19">Belongs to the FKBP-type PPIase family.</text>
</comment>
<gene>
    <name evidence="14 17 18" type="primary">FKBP42</name>
    <name evidence="15 17" type="synonym">TWD1</name>
    <name evidence="16" type="synonym">UCU2</name>
    <name evidence="20" type="ordered locus">At3g21640</name>
    <name evidence="21" type="ORF">MIL23.21</name>
</gene>
<sequence>MDESLEHQTQTHDQESEIVTEGSAVVHSEPSQEGNVPPKVDSEAEVLDEKVSKQIIKEGHGSKPSKYSTCFLHYRAWTKNSQHKFEDTWHEQQPIELVLGKEKKELAGLAIGVASMKSGERALVHVGWELAYGKEGNFSFPNVPPMADLLYEVEVIGFDETKEGKARSDMTVEERIGAADRRKMDGNSLFKEEKLEEAMQQYEMAIAYMGDDFMFQLYGKYQDMALAVKNPCHLNIAACLIKLKRYDEAIGHCNIVLTEEEKNPKALFRRGKAKAELGQMDSARDDFRKAQKYAPDDKAIRRELRALAEQEKALYQKQKEMYKGIFKGKDEGGAKSKSLFWLIVLWQWFVSLFSRIFRRHRVKAD</sequence>
<proteinExistence type="evidence at protein level"/>
<organism>
    <name type="scientific">Arabidopsis thaliana</name>
    <name type="common">Mouse-ear cress</name>
    <dbReference type="NCBI Taxonomy" id="3702"/>
    <lineage>
        <taxon>Eukaryota</taxon>
        <taxon>Viridiplantae</taxon>
        <taxon>Streptophyta</taxon>
        <taxon>Embryophyta</taxon>
        <taxon>Tracheophyta</taxon>
        <taxon>Spermatophyta</taxon>
        <taxon>Magnoliopsida</taxon>
        <taxon>eudicotyledons</taxon>
        <taxon>Gunneridae</taxon>
        <taxon>Pentapetalae</taxon>
        <taxon>rosids</taxon>
        <taxon>malvids</taxon>
        <taxon>Brassicales</taxon>
        <taxon>Brassicaceae</taxon>
        <taxon>Camelineae</taxon>
        <taxon>Arabidopsis</taxon>
    </lineage>
</organism>
<name>FKB42_ARATH</name>
<protein>
    <recommendedName>
        <fullName>Peptidyl-prolyl cis-trans isomerase FKBP42</fullName>
        <shortName>PPIase FKBP42</shortName>
        <ecNumber evidence="3">5.2.1.8</ecNumber>
    </recommendedName>
    <alternativeName>
        <fullName>42 kDa peptidyl-prolyl isomerase</fullName>
    </alternativeName>
    <alternativeName>
        <fullName evidence="14 17 18">FK506-binding protein 42</fullName>
        <shortName evidence="14 17 18">AtFKBP42</shortName>
    </alternativeName>
    <alternativeName>
        <fullName>Immunophilin FKBP42</fullName>
    </alternativeName>
    <alternativeName>
        <fullName evidence="15 17">Protein TWISTED DWARF 1</fullName>
    </alternativeName>
    <alternativeName>
        <fullName evidence="16">Protein ULTRACURVATA 2</fullName>
    </alternativeName>
    <alternativeName>
        <fullName>Rotamase</fullName>
    </alternativeName>
</protein>
<keyword id="KW-0002">3D-structure</keyword>
<keyword id="KW-0927">Auxin signaling pathway</keyword>
<keyword id="KW-0112">Calmodulin-binding</keyword>
<keyword id="KW-1003">Cell membrane</keyword>
<keyword id="KW-0256">Endoplasmic reticulum</keyword>
<keyword id="KW-0413">Isomerase</keyword>
<keyword id="KW-0472">Membrane</keyword>
<keyword id="KW-1185">Reference proteome</keyword>
<keyword id="KW-0677">Repeat</keyword>
<keyword id="KW-0697">Rotamase</keyword>
<keyword id="KW-0802">TPR repeat</keyword>
<keyword id="KW-0812">Transmembrane</keyword>
<keyword id="KW-1133">Transmembrane helix</keyword>
<keyword id="KW-0926">Vacuole</keyword>
<evidence type="ECO:0000250" key="1">
    <source>
        <dbReference type="UniProtKB" id="P20081"/>
    </source>
</evidence>
<evidence type="ECO:0000255" key="2"/>
<evidence type="ECO:0000255" key="3">
    <source>
        <dbReference type="PROSITE-ProRule" id="PRU00277"/>
    </source>
</evidence>
<evidence type="ECO:0000256" key="4">
    <source>
        <dbReference type="SAM" id="MobiDB-lite"/>
    </source>
</evidence>
<evidence type="ECO:0000269" key="5">
    <source>
    </source>
</evidence>
<evidence type="ECO:0000269" key="6">
    <source>
    </source>
</evidence>
<evidence type="ECO:0000269" key="7">
    <source>
    </source>
</evidence>
<evidence type="ECO:0000269" key="8">
    <source>
    </source>
</evidence>
<evidence type="ECO:0000269" key="9">
    <source>
    </source>
</evidence>
<evidence type="ECO:0000269" key="10">
    <source>
    </source>
</evidence>
<evidence type="ECO:0000269" key="11">
    <source>
    </source>
</evidence>
<evidence type="ECO:0000269" key="12">
    <source>
    </source>
</evidence>
<evidence type="ECO:0000269" key="13">
    <source>
    </source>
</evidence>
<evidence type="ECO:0000303" key="14">
    <source>
    </source>
</evidence>
<evidence type="ECO:0000303" key="15">
    <source>
    </source>
</evidence>
<evidence type="ECO:0000303" key="16">
    <source>
    </source>
</evidence>
<evidence type="ECO:0000303" key="17">
    <source>
    </source>
</evidence>
<evidence type="ECO:0000303" key="18">
    <source ref="1"/>
</evidence>
<evidence type="ECO:0000305" key="19"/>
<evidence type="ECO:0000312" key="20">
    <source>
        <dbReference type="Araport" id="AT3G21640"/>
    </source>
</evidence>
<evidence type="ECO:0000312" key="21">
    <source>
        <dbReference type="EMBL" id="BAB02359.1"/>
    </source>
</evidence>
<evidence type="ECO:0007829" key="22">
    <source>
        <dbReference type="PDB" id="2F4E"/>
    </source>
</evidence>
<evidence type="ECO:0007829" key="23">
    <source>
        <dbReference type="PDB" id="2IF4"/>
    </source>
</evidence>
<dbReference type="EC" id="5.2.1.8" evidence="3"/>
<dbReference type="EMBL" id="AJ224640">
    <property type="protein sequence ID" value="CAC00654.1"/>
    <property type="molecule type" value="mRNA"/>
</dbReference>
<dbReference type="EMBL" id="AB019232">
    <property type="protein sequence ID" value="BAB02359.1"/>
    <property type="molecule type" value="Genomic_DNA"/>
</dbReference>
<dbReference type="EMBL" id="CP002686">
    <property type="protein sequence ID" value="AEE76533.1"/>
    <property type="molecule type" value="Genomic_DNA"/>
</dbReference>
<dbReference type="EMBL" id="AY093009">
    <property type="protein sequence ID" value="AAM13008.1"/>
    <property type="molecule type" value="mRNA"/>
</dbReference>
<dbReference type="EMBL" id="BT001192">
    <property type="protein sequence ID" value="AAN65079.1"/>
    <property type="molecule type" value="mRNA"/>
</dbReference>
<dbReference type="RefSeq" id="NP_188801.2">
    <property type="nucleotide sequence ID" value="NM_113059.3"/>
</dbReference>
<dbReference type="PDB" id="2F4E">
    <property type="method" value="X-ray"/>
    <property type="resolution" value="2.32 A"/>
    <property type="chains" value="A/B=1-180"/>
</dbReference>
<dbReference type="PDB" id="2IF4">
    <property type="method" value="X-ray"/>
    <property type="resolution" value="2.85 A"/>
    <property type="chains" value="A=1-338"/>
</dbReference>
<dbReference type="PDBsum" id="2F4E"/>
<dbReference type="PDBsum" id="2IF4"/>
<dbReference type="BMRB" id="Q9LDC0"/>
<dbReference type="SMR" id="Q9LDC0"/>
<dbReference type="BioGRID" id="7050">
    <property type="interactions" value="31"/>
</dbReference>
<dbReference type="FunCoup" id="Q9LDC0">
    <property type="interactions" value="170"/>
</dbReference>
<dbReference type="IntAct" id="Q9LDC0">
    <property type="interactions" value="26"/>
</dbReference>
<dbReference type="STRING" id="3702.Q9LDC0"/>
<dbReference type="TCDB" id="8.A.11.1.1">
    <property type="family name" value="the immunophilin-like prolyl:peptidyl isomerase regulator (i-ppi) family"/>
</dbReference>
<dbReference type="PaxDb" id="3702-AT3G21640.1"/>
<dbReference type="ProteomicsDB" id="230585"/>
<dbReference type="EnsemblPlants" id="AT3G21640.1">
    <property type="protein sequence ID" value="AT3G21640.1"/>
    <property type="gene ID" value="AT3G21640"/>
</dbReference>
<dbReference type="GeneID" id="821718"/>
<dbReference type="Gramene" id="AT3G21640.1">
    <property type="protein sequence ID" value="AT3G21640.1"/>
    <property type="gene ID" value="AT3G21640"/>
</dbReference>
<dbReference type="KEGG" id="ath:AT3G21640"/>
<dbReference type="Araport" id="AT3G21640"/>
<dbReference type="TAIR" id="AT3G21640">
    <property type="gene designation" value="TWD1"/>
</dbReference>
<dbReference type="eggNOG" id="KOG0543">
    <property type="taxonomic scope" value="Eukaryota"/>
</dbReference>
<dbReference type="HOGENOM" id="CLU_013615_4_0_1"/>
<dbReference type="InParanoid" id="Q9LDC0"/>
<dbReference type="OMA" id="ICVASMK"/>
<dbReference type="OrthoDB" id="433738at2759"/>
<dbReference type="PhylomeDB" id="Q9LDC0"/>
<dbReference type="EvolutionaryTrace" id="Q9LDC0"/>
<dbReference type="PRO" id="PR:Q9LDC0"/>
<dbReference type="Proteomes" id="UP000006548">
    <property type="component" value="Chromosome 3"/>
</dbReference>
<dbReference type="ExpressionAtlas" id="Q9LDC0">
    <property type="expression patterns" value="baseline and differential"/>
</dbReference>
<dbReference type="GO" id="GO:0005783">
    <property type="term" value="C:endoplasmic reticulum"/>
    <property type="evidence" value="ECO:0007669"/>
    <property type="project" value="UniProtKB-SubCell"/>
</dbReference>
<dbReference type="GO" id="GO:0005886">
    <property type="term" value="C:plasma membrane"/>
    <property type="evidence" value="ECO:0000314"/>
    <property type="project" value="TAIR"/>
</dbReference>
<dbReference type="GO" id="GO:0005774">
    <property type="term" value="C:vacuolar membrane"/>
    <property type="evidence" value="ECO:0007669"/>
    <property type="project" value="UniProtKB-SubCell"/>
</dbReference>
<dbReference type="GO" id="GO:0005516">
    <property type="term" value="F:calmodulin binding"/>
    <property type="evidence" value="ECO:0000314"/>
    <property type="project" value="TAIR"/>
</dbReference>
<dbReference type="GO" id="GO:0003755">
    <property type="term" value="F:peptidyl-prolyl cis-trans isomerase activity"/>
    <property type="evidence" value="ECO:0000250"/>
    <property type="project" value="TAIR"/>
</dbReference>
<dbReference type="GO" id="GO:0009734">
    <property type="term" value="P:auxin-activated signaling pathway"/>
    <property type="evidence" value="ECO:0007669"/>
    <property type="project" value="UniProtKB-KW"/>
</dbReference>
<dbReference type="GO" id="GO:0048366">
    <property type="term" value="P:leaf development"/>
    <property type="evidence" value="ECO:0000315"/>
    <property type="project" value="TAIR"/>
</dbReference>
<dbReference type="FunFam" id="1.25.40.10:FF:000708">
    <property type="entry name" value="Peptidylprolyl isomerase"/>
    <property type="match status" value="1"/>
</dbReference>
<dbReference type="Gene3D" id="3.10.50.40">
    <property type="match status" value="1"/>
</dbReference>
<dbReference type="Gene3D" id="1.25.40.10">
    <property type="entry name" value="Tetratricopeptide repeat domain"/>
    <property type="match status" value="1"/>
</dbReference>
<dbReference type="InterPro" id="IPR039663">
    <property type="entry name" value="AIP/AIPL1/TTC9"/>
</dbReference>
<dbReference type="InterPro" id="IPR046357">
    <property type="entry name" value="PPIase_dom_sf"/>
</dbReference>
<dbReference type="InterPro" id="IPR001179">
    <property type="entry name" value="PPIase_FKBP_dom"/>
</dbReference>
<dbReference type="InterPro" id="IPR011990">
    <property type="entry name" value="TPR-like_helical_dom_sf"/>
</dbReference>
<dbReference type="InterPro" id="IPR019734">
    <property type="entry name" value="TPR_rpt"/>
</dbReference>
<dbReference type="PANTHER" id="PTHR11242">
    <property type="entry name" value="ARYL HYDROCARBON RECEPTOR INTERACTING PROTEIN RELATED"/>
    <property type="match status" value="1"/>
</dbReference>
<dbReference type="PANTHER" id="PTHR11242:SF0">
    <property type="entry name" value="TPR_REGION DOMAIN-CONTAINING PROTEIN"/>
    <property type="match status" value="1"/>
</dbReference>
<dbReference type="Pfam" id="PF00254">
    <property type="entry name" value="FKBP_C"/>
    <property type="match status" value="1"/>
</dbReference>
<dbReference type="Pfam" id="PF13181">
    <property type="entry name" value="TPR_8"/>
    <property type="match status" value="1"/>
</dbReference>
<dbReference type="SMART" id="SM00028">
    <property type="entry name" value="TPR"/>
    <property type="match status" value="3"/>
</dbReference>
<dbReference type="SUPFAM" id="SSF54534">
    <property type="entry name" value="FKBP-like"/>
    <property type="match status" value="1"/>
</dbReference>
<dbReference type="SUPFAM" id="SSF48452">
    <property type="entry name" value="TPR-like"/>
    <property type="match status" value="1"/>
</dbReference>
<dbReference type="PROSITE" id="PS50059">
    <property type="entry name" value="FKBP_PPIASE"/>
    <property type="match status" value="1"/>
</dbReference>
<dbReference type="PROSITE" id="PS50005">
    <property type="entry name" value="TPR"/>
    <property type="match status" value="2"/>
</dbReference>
<dbReference type="PROSITE" id="PS50293">
    <property type="entry name" value="TPR_REGION"/>
    <property type="match status" value="2"/>
</dbReference>